<proteinExistence type="inferred from homology"/>
<comment type="function">
    <text evidence="1">The antigen 85 proteins (FbpA, FbpB, FbpC) are responsible for the high affinity of mycobacteria to fibronectin, a large adhesive glycoprotein, which facilitates the attachment of M.tuberculosis to murine alveolar macrophages (AMs). They also help to maintain the integrity of the cell wall by catalyzing the transfer of mycolic acids to cell wall arabinogalactan and through the synthesis of alpha,alpha-trehalose dimycolate (TDM, cord factor). They catalyze the transfer of a mycoloyl residue from one molecule of alpha,alpha-trehalose monomycolate (TMM) to another TMM, leading to the formation of TDM (By similarity).</text>
</comment>
<comment type="catalytic activity">
    <reaction>
        <text>an acyl-CoA + a 1,2-diacyl-sn-glycerol = a triacyl-sn-glycerol + CoA</text>
        <dbReference type="Rhea" id="RHEA:10868"/>
        <dbReference type="ChEBI" id="CHEBI:17815"/>
        <dbReference type="ChEBI" id="CHEBI:57287"/>
        <dbReference type="ChEBI" id="CHEBI:58342"/>
        <dbReference type="ChEBI" id="CHEBI:64615"/>
        <dbReference type="EC" id="2.3.1.20"/>
    </reaction>
</comment>
<comment type="catalytic activity">
    <reaction>
        <text>2 alpha,alpha'-trehalose 6-mycolate = alpha,alpha'-trehalose 6,6'-bismycolate + alpha,alpha-trehalose</text>
        <dbReference type="Rhea" id="RHEA:23472"/>
        <dbReference type="ChEBI" id="CHEBI:16551"/>
        <dbReference type="ChEBI" id="CHEBI:18195"/>
        <dbReference type="ChEBI" id="CHEBI:18234"/>
        <dbReference type="EC" id="2.3.1.122"/>
    </reaction>
</comment>
<comment type="subunit">
    <text evidence="1">Homodimer.</text>
</comment>
<comment type="subcellular location">
    <subcellularLocation>
        <location evidence="1">Secreted</location>
    </subcellularLocation>
</comment>
<comment type="similarity">
    <text evidence="3">Belongs to the mycobacterial A85 antigen family.</text>
</comment>
<accession>P0A4V5</accession>
<accession>A0A1R3XUE5</accession>
<accession>P31953</accession>
<accession>P96806</accession>
<accession>X2BE42</accession>
<protein>
    <recommendedName>
        <fullName>Diacylglycerol acyltransferase/mycolyltransferase Ag85C</fullName>
        <shortName>DGAT</shortName>
        <ecNumber>2.3.1.122</ecNumber>
        <ecNumber>2.3.1.20</ecNumber>
    </recommendedName>
    <alternativeName>
        <fullName>Acyl-CoA:diacylglycerol acyltransferase</fullName>
    </alternativeName>
    <alternativeName>
        <fullName>Antigen 85 complex C</fullName>
        <shortName>85C</shortName>
        <shortName>Ag85C</shortName>
    </alternativeName>
    <alternativeName>
        <fullName>Fibronectin-binding protein C</fullName>
        <shortName>Fbps C</shortName>
    </alternativeName>
</protein>
<name>A85C_MYCBO</name>
<gene>
    <name type="primary">fbpC</name>
    <name type="synonym">mpt45</name>
    <name type="ordered locus">BQ2027_MB0134C</name>
</gene>
<organism>
    <name type="scientific">Mycobacterium bovis (strain ATCC BAA-935 / AF2122/97)</name>
    <dbReference type="NCBI Taxonomy" id="233413"/>
    <lineage>
        <taxon>Bacteria</taxon>
        <taxon>Bacillati</taxon>
        <taxon>Actinomycetota</taxon>
        <taxon>Actinomycetes</taxon>
        <taxon>Mycobacteriales</taxon>
        <taxon>Mycobacteriaceae</taxon>
        <taxon>Mycobacterium</taxon>
        <taxon>Mycobacterium tuberculosis complex</taxon>
    </lineage>
</organism>
<keyword id="KW-0012">Acyltransferase</keyword>
<keyword id="KW-1185">Reference proteome</keyword>
<keyword id="KW-0964">Secreted</keyword>
<keyword id="KW-0732">Signal</keyword>
<keyword id="KW-0808">Transferase</keyword>
<sequence length="340" mass="36771">MTFFEQVRRLRSAATTLPRRLAIAAMGAVLVYGLVGTFGGPATAGAFSRPGLPVEYLQVPSASMGRDIKVQFQGGGPHAVYLLDGLRAQDDYNGWDINTPAFEEYYQSGLSVIMPVGGQSSFYTDWYQPSQSNGQNYTYKWETFLTREMPAWLQANKGVSPTGNAAVGLSMSGGSALILAAYYPQQFPYAASLSGFLNPSEGWWPTLIGLAMNDSGGYNANSMWGPSSDPAWKRNDPMVQIPRLVANNTRIWVYCGNGTPSDLGGDNIPAKFLEGLTLRTNQTFRDTYAADGGRNGVFNFPPNGTHSWPYWNEQLVAMKADIQHVLNGATPPAAPAAPAA</sequence>
<feature type="signal peptide" evidence="2">
    <location>
        <begin position="1"/>
        <end position="45"/>
    </location>
</feature>
<feature type="chain" id="PRO_0000000224" description="Diacylglycerol acyltransferase/mycolyltransferase Ag85C">
    <location>
        <begin position="46"/>
        <end position="340"/>
    </location>
</feature>
<feature type="region of interest" description="Fibronectin-binding">
    <location>
        <begin position="102"/>
        <end position="112"/>
    </location>
</feature>
<feature type="active site" description="Nucleophile" evidence="1">
    <location>
        <position position="170"/>
    </location>
</feature>
<feature type="active site" evidence="1">
    <location>
        <position position="274"/>
    </location>
</feature>
<feature type="active site" evidence="1">
    <location>
        <position position="306"/>
    </location>
</feature>
<feature type="binding site" evidence="1">
    <location>
        <begin position="86"/>
        <end position="87"/>
    </location>
    <ligand>
        <name>substrate</name>
    </ligand>
</feature>
<feature type="binding site" evidence="1">
    <location>
        <position position="170"/>
    </location>
    <ligand>
        <name>substrate</name>
    </ligand>
</feature>
<feature type="binding site" evidence="1">
    <location>
        <position position="198"/>
    </location>
    <ligand>
        <name>substrate</name>
    </ligand>
</feature>
<feature type="binding site" evidence="1">
    <location>
        <begin position="276"/>
        <end position="279"/>
    </location>
    <ligand>
        <name>substrate</name>
    </ligand>
</feature>
<feature type="binding site" evidence="1">
    <location>
        <begin position="306"/>
        <end position="308"/>
    </location>
    <ligand>
        <name>substrate</name>
    </ligand>
</feature>
<reference key="1">
    <citation type="journal article" date="2003" name="Proc. Natl. Acad. Sci. U.S.A.">
        <title>The complete genome sequence of Mycobacterium bovis.</title>
        <authorList>
            <person name="Garnier T."/>
            <person name="Eiglmeier K."/>
            <person name="Camus J.-C."/>
            <person name="Medina N."/>
            <person name="Mansoor H."/>
            <person name="Pryor M."/>
            <person name="Duthoy S."/>
            <person name="Grondin S."/>
            <person name="Lacroix C."/>
            <person name="Monsempe C."/>
            <person name="Simon S."/>
            <person name="Harris B."/>
            <person name="Atkin R."/>
            <person name="Doggett J."/>
            <person name="Mayes R."/>
            <person name="Keating L."/>
            <person name="Wheeler P.R."/>
            <person name="Parkhill J."/>
            <person name="Barrell B.G."/>
            <person name="Cole S.T."/>
            <person name="Gordon S.V."/>
            <person name="Hewinson R.G."/>
        </authorList>
    </citation>
    <scope>NUCLEOTIDE SEQUENCE [LARGE SCALE GENOMIC DNA]</scope>
    <source>
        <strain>ATCC BAA-935 / AF2122/97</strain>
    </source>
</reference>
<reference key="2">
    <citation type="journal article" date="2017" name="Genome Announc.">
        <title>Updated reference genome sequence and annotation of Mycobacterium bovis AF2122/97.</title>
        <authorList>
            <person name="Malone K.M."/>
            <person name="Farrell D."/>
            <person name="Stuber T.P."/>
            <person name="Schubert O.T."/>
            <person name="Aebersold R."/>
            <person name="Robbe-Austerman S."/>
            <person name="Gordon S.V."/>
        </authorList>
    </citation>
    <scope>NUCLEOTIDE SEQUENCE [LARGE SCALE GENOMIC DNA]</scope>
    <scope>GENOME REANNOTATION</scope>
    <source>
        <strain>ATCC BAA-935 / AF2122/97</strain>
    </source>
</reference>
<dbReference type="EC" id="2.3.1.122"/>
<dbReference type="EC" id="2.3.1.20"/>
<dbReference type="EMBL" id="LT708304">
    <property type="protein sequence ID" value="SIT98556.1"/>
    <property type="molecule type" value="Genomic_DNA"/>
</dbReference>
<dbReference type="RefSeq" id="NP_853801.1">
    <property type="nucleotide sequence ID" value="NC_002945.3"/>
</dbReference>
<dbReference type="RefSeq" id="WP_003400908.1">
    <property type="nucleotide sequence ID" value="NC_002945.4"/>
</dbReference>
<dbReference type="SMR" id="P0A4V5"/>
<dbReference type="ESTHER" id="myctu-a85c">
    <property type="family name" value="A85-Mycolyl-transferase"/>
</dbReference>
<dbReference type="GeneID" id="45424095"/>
<dbReference type="PATRIC" id="fig|233413.5.peg.151"/>
<dbReference type="Proteomes" id="UP000001419">
    <property type="component" value="Chromosome"/>
</dbReference>
<dbReference type="GO" id="GO:0005576">
    <property type="term" value="C:extracellular region"/>
    <property type="evidence" value="ECO:0007669"/>
    <property type="project" value="UniProtKB-SubCell"/>
</dbReference>
<dbReference type="GO" id="GO:0004144">
    <property type="term" value="F:diacylglycerol O-acyltransferase activity"/>
    <property type="evidence" value="ECO:0007669"/>
    <property type="project" value="UniProtKB-EC"/>
</dbReference>
<dbReference type="GO" id="GO:0050348">
    <property type="term" value="F:trehalose O-mycolyltransferase activity"/>
    <property type="evidence" value="ECO:0007669"/>
    <property type="project" value="UniProtKB-EC"/>
</dbReference>
<dbReference type="FunFam" id="3.40.50.1820:FF:000086">
    <property type="entry name" value="Diacylglycerol acyltransferase/mycolyltransferase Ag85C"/>
    <property type="match status" value="1"/>
</dbReference>
<dbReference type="Gene3D" id="3.40.50.1820">
    <property type="entry name" value="alpha/beta hydrolase"/>
    <property type="match status" value="1"/>
</dbReference>
<dbReference type="InterPro" id="IPR029058">
    <property type="entry name" value="AB_hydrolase_fold"/>
</dbReference>
<dbReference type="InterPro" id="IPR000801">
    <property type="entry name" value="Esterase-like"/>
</dbReference>
<dbReference type="InterPro" id="IPR050583">
    <property type="entry name" value="Mycobacterial_A85_antigen"/>
</dbReference>
<dbReference type="PANTHER" id="PTHR48098:SF1">
    <property type="entry name" value="DIACYLGLYCEROL ACYLTRANSFERASE_MYCOLYLTRANSFERASE AG85A"/>
    <property type="match status" value="1"/>
</dbReference>
<dbReference type="PANTHER" id="PTHR48098">
    <property type="entry name" value="ENTEROCHELIN ESTERASE-RELATED"/>
    <property type="match status" value="1"/>
</dbReference>
<dbReference type="Pfam" id="PF00756">
    <property type="entry name" value="Esterase"/>
    <property type="match status" value="1"/>
</dbReference>
<dbReference type="SUPFAM" id="SSF53474">
    <property type="entry name" value="alpha/beta-Hydrolases"/>
    <property type="match status" value="1"/>
</dbReference>
<evidence type="ECO:0000250" key="1"/>
<evidence type="ECO:0000255" key="2"/>
<evidence type="ECO:0000305" key="3"/>